<evidence type="ECO:0000250" key="1">
    <source>
        <dbReference type="UniProtKB" id="Q9P1U0"/>
    </source>
</evidence>
<evidence type="ECO:0000250" key="2">
    <source>
        <dbReference type="UniProtKB" id="Q9Y2Y1"/>
    </source>
</evidence>
<evidence type="ECO:0000255" key="3">
    <source>
        <dbReference type="PROSITE-ProRule" id="PRU00472"/>
    </source>
</evidence>
<evidence type="ECO:0000255" key="4">
    <source>
        <dbReference type="PROSITE-ProRule" id="PRU10145"/>
    </source>
</evidence>
<evidence type="ECO:0000305" key="5"/>
<protein>
    <recommendedName>
        <fullName evidence="1">DNA-directed RNA polymerase I subunit RPA12</fullName>
    </recommendedName>
    <alternativeName>
        <fullName evidence="1">DNA-directed RNA polymerase I subunit H</fullName>
    </alternativeName>
</protein>
<reference key="1">
    <citation type="journal article" date="2004" name="Mol. Biol. Evol.">
        <title>Rhesus macaque class I duplicon structures, organization, and evolution within the alpha block of the major histocompatibility complex.</title>
        <authorList>
            <person name="Kulski J.K."/>
            <person name="Anzai T."/>
            <person name="Shiina T."/>
            <person name="Inoko H."/>
        </authorList>
    </citation>
    <scope>NUCLEOTIDE SEQUENCE [LARGE SCALE GENOMIC DNA]</scope>
</reference>
<gene>
    <name evidence="1" type="primary">POLR1H</name>
</gene>
<proteinExistence type="inferred from homology"/>
<keyword id="KW-0240">DNA-directed RNA polymerase</keyword>
<keyword id="KW-0479">Metal-binding</keyword>
<keyword id="KW-0539">Nucleus</keyword>
<keyword id="KW-1185">Reference proteome</keyword>
<keyword id="KW-0804">Transcription</keyword>
<keyword id="KW-0862">Zinc</keyword>
<keyword id="KW-0863">Zinc-finger</keyword>
<organism>
    <name type="scientific">Macaca mulatta</name>
    <name type="common">Rhesus macaque</name>
    <dbReference type="NCBI Taxonomy" id="9544"/>
    <lineage>
        <taxon>Eukaryota</taxon>
        <taxon>Metazoa</taxon>
        <taxon>Chordata</taxon>
        <taxon>Craniata</taxon>
        <taxon>Vertebrata</taxon>
        <taxon>Euteleostomi</taxon>
        <taxon>Mammalia</taxon>
        <taxon>Eutheria</taxon>
        <taxon>Euarchontoglires</taxon>
        <taxon>Primates</taxon>
        <taxon>Haplorrhini</taxon>
        <taxon>Catarrhini</taxon>
        <taxon>Cercopithecidae</taxon>
        <taxon>Cercopithecinae</taxon>
        <taxon>Macaca</taxon>
    </lineage>
</organism>
<comment type="function">
    <text evidence="1">Core component of RNA polymerase I (Pol I), a DNA-dependent RNA polymerase which synthesizes ribosomal RNA precursors using the four ribonucleoside triphosphates as substrates. Can mediate Pol I proofreading of the nascent RNA transcript. Anchors into the Pol I active site to monitor transcription fidelity and cleave mis-incorporated 5'-ribonucleotides.</text>
</comment>
<comment type="subunit">
    <text evidence="1">Component of the RNA polymerase I (Pol I) complex consisting of 13 subunits: a ten-subunit catalytic core composed of POLR1A/RPA1, POLR1B/RPA2, POLR1C/RPAC1, POLR1D/RPAC2, POLR1H/RPA12, POLR2E/RPABC1, POLR2F/RPABC2, POLR2H/RPABC3, POLR2K/RPABC4 and POLR2L/RPABC5; a mobile stalk subunit POLR1F/RPA43 protruding from the core and additional subunits homologous to general transcription factors POLR1E/RPA49 and POLR1G/RPA34. Part of Pol I pre-initiation complex (PIC), in which Pol I core assembles with RRN3 and promoter-bound UTBF and SL1/TIF-IB complex.</text>
</comment>
<comment type="subcellular location">
    <subcellularLocation>
        <location evidence="1">Nucleus</location>
        <location evidence="1">Nucleolus</location>
    </subcellularLocation>
</comment>
<comment type="domain">
    <text evidence="1 2">The TFIIS-type zinc-binding beta-ribbon domain contains an acidic hairpin motif (residues Asp-106, Glu-107) that likely coordinates the nucleophilic water and magnesium to cleave the scissile phosphodiester bond and release the mis-incorporated 5'-ribonucleotides.</text>
</comment>
<comment type="similarity">
    <text evidence="5">Belongs to the archaeal RpoM/eukaryotic RPA12/RPB9/RPC11 RNA polymerase family.</text>
</comment>
<feature type="chain" id="PRO_0000121461" description="DNA-directed RNA polymerase I subunit RPA12">
    <location>
        <begin position="1"/>
        <end position="126"/>
    </location>
</feature>
<feature type="zinc finger region" description="C4-type" evidence="1">
    <location>
        <begin position="20"/>
        <end position="41"/>
    </location>
</feature>
<feature type="zinc finger region" description="TFIIS-type" evidence="3">
    <location>
        <begin position="83"/>
        <end position="123"/>
    </location>
</feature>
<feature type="short sequence motif" description="Hairpin" evidence="1 2">
    <location>
        <begin position="106"/>
        <end position="107"/>
    </location>
</feature>
<feature type="binding site" evidence="4">
    <location>
        <position position="20"/>
    </location>
    <ligand>
        <name>Zn(2+)</name>
        <dbReference type="ChEBI" id="CHEBI:29105"/>
        <label>1</label>
    </ligand>
</feature>
<feature type="binding site" evidence="4">
    <location>
        <position position="23"/>
    </location>
    <ligand>
        <name>Zn(2+)</name>
        <dbReference type="ChEBI" id="CHEBI:29105"/>
        <label>1</label>
    </ligand>
</feature>
<feature type="binding site" evidence="4">
    <location>
        <position position="38"/>
    </location>
    <ligand>
        <name>Zn(2+)</name>
        <dbReference type="ChEBI" id="CHEBI:29105"/>
        <label>1</label>
    </ligand>
</feature>
<feature type="binding site" evidence="4">
    <location>
        <position position="41"/>
    </location>
    <ligand>
        <name>Zn(2+)</name>
        <dbReference type="ChEBI" id="CHEBI:29105"/>
        <label>1</label>
    </ligand>
</feature>
<feature type="binding site" evidence="3">
    <location>
        <position position="87"/>
    </location>
    <ligand>
        <name>Zn(2+)</name>
        <dbReference type="ChEBI" id="CHEBI:29105"/>
        <label>2</label>
    </ligand>
</feature>
<feature type="binding site" evidence="3">
    <location>
        <position position="90"/>
    </location>
    <ligand>
        <name>Zn(2+)</name>
        <dbReference type="ChEBI" id="CHEBI:29105"/>
        <label>2</label>
    </ligand>
</feature>
<feature type="binding site" evidence="3">
    <location>
        <position position="115"/>
    </location>
    <ligand>
        <name>Zn(2+)</name>
        <dbReference type="ChEBI" id="CHEBI:29105"/>
        <label>2</label>
    </ligand>
</feature>
<feature type="binding site" evidence="3">
    <location>
        <position position="118"/>
    </location>
    <ligand>
        <name>Zn(2+)</name>
        <dbReference type="ChEBI" id="CHEBI:29105"/>
        <label>2</label>
    </ligand>
</feature>
<accession>Q5TM50</accession>
<name>RPA12_MACMU</name>
<sequence>MSVMDLAGTCSSFQSDLDFCSDCGSVLPLPGAQDTVTCTRCGFNINVRDFEGKVVKTSVVFHQLGTAMPMSVEEGPECQGPVVDRRCPRCGHEGMAYHTRQMRSADEGQTVFYTCTNCKFQEKEDS</sequence>
<dbReference type="EMBL" id="AB128049">
    <property type="protein sequence ID" value="BAD69776.1"/>
    <property type="molecule type" value="Genomic_DNA"/>
</dbReference>
<dbReference type="RefSeq" id="NP_001108417.1">
    <property type="nucleotide sequence ID" value="NM_001114945.1"/>
</dbReference>
<dbReference type="SMR" id="Q5TM50"/>
<dbReference type="FunCoup" id="Q5TM50">
    <property type="interactions" value="1699"/>
</dbReference>
<dbReference type="STRING" id="9544.ENSMMUP00000015888"/>
<dbReference type="PaxDb" id="9544-ENSMMUP00000015890"/>
<dbReference type="Ensembl" id="ENSMMUT00000016967.4">
    <property type="protein sequence ID" value="ENSMMUP00000015890.3"/>
    <property type="gene ID" value="ENSMMUG00000012120.4"/>
</dbReference>
<dbReference type="GeneID" id="712151"/>
<dbReference type="KEGG" id="mcc:712151"/>
<dbReference type="CTD" id="30834"/>
<dbReference type="VEuPathDB" id="HostDB:ENSMMUG00000012120"/>
<dbReference type="VGNC" id="VGNC:78912">
    <property type="gene designation" value="POLR1H"/>
</dbReference>
<dbReference type="eggNOG" id="KOG2907">
    <property type="taxonomic scope" value="Eukaryota"/>
</dbReference>
<dbReference type="GeneTree" id="ENSGT00390000008126"/>
<dbReference type="InParanoid" id="Q5TM50"/>
<dbReference type="OrthoDB" id="10056816at2759"/>
<dbReference type="Proteomes" id="UP000006718">
    <property type="component" value="Chromosome 4"/>
</dbReference>
<dbReference type="Bgee" id="ENSMMUG00000012120">
    <property type="expression patterns" value="Expressed in ileum and 21 other cell types or tissues"/>
</dbReference>
<dbReference type="ExpressionAtlas" id="Q5TM50">
    <property type="expression patterns" value="baseline"/>
</dbReference>
<dbReference type="GO" id="GO:0005736">
    <property type="term" value="C:RNA polymerase I complex"/>
    <property type="evidence" value="ECO:0000318"/>
    <property type="project" value="GO_Central"/>
</dbReference>
<dbReference type="GO" id="GO:0003899">
    <property type="term" value="F:DNA-directed RNA polymerase activity"/>
    <property type="evidence" value="ECO:0007669"/>
    <property type="project" value="InterPro"/>
</dbReference>
<dbReference type="GO" id="GO:0003676">
    <property type="term" value="F:nucleic acid binding"/>
    <property type="evidence" value="ECO:0007669"/>
    <property type="project" value="InterPro"/>
</dbReference>
<dbReference type="GO" id="GO:0008270">
    <property type="term" value="F:zinc ion binding"/>
    <property type="evidence" value="ECO:0007669"/>
    <property type="project" value="UniProtKB-KW"/>
</dbReference>
<dbReference type="GO" id="GO:0006363">
    <property type="term" value="P:termination of RNA polymerase I transcription"/>
    <property type="evidence" value="ECO:0000318"/>
    <property type="project" value="GO_Central"/>
</dbReference>
<dbReference type="CDD" id="cd10507">
    <property type="entry name" value="Zn-ribbon_RPA12"/>
    <property type="match status" value="1"/>
</dbReference>
<dbReference type="FunFam" id="2.20.25.10:FF:000020">
    <property type="entry name" value="DNA-directed RNA polymerase subunit"/>
    <property type="match status" value="1"/>
</dbReference>
<dbReference type="Gene3D" id="2.20.25.10">
    <property type="match status" value="1"/>
</dbReference>
<dbReference type="InterPro" id="IPR019761">
    <property type="entry name" value="DNA-dir_RNA_pol-M_15_CS"/>
</dbReference>
<dbReference type="InterPro" id="IPR012164">
    <property type="entry name" value="Rpa12/Rpb9/Rpc10/TFS"/>
</dbReference>
<dbReference type="InterPro" id="IPR034004">
    <property type="entry name" value="Zn_ribbon_RPA12_C"/>
</dbReference>
<dbReference type="InterPro" id="IPR001222">
    <property type="entry name" value="Znf_TFIIS"/>
</dbReference>
<dbReference type="PANTHER" id="PTHR11239">
    <property type="entry name" value="DNA-DIRECTED RNA POLYMERASE"/>
    <property type="match status" value="1"/>
</dbReference>
<dbReference type="PANTHER" id="PTHR11239:SF14">
    <property type="entry name" value="DNA-DIRECTED RNA POLYMERASE I SUBUNIT RPA12"/>
    <property type="match status" value="1"/>
</dbReference>
<dbReference type="Pfam" id="PF01096">
    <property type="entry name" value="Zn_ribbon_TFIIS"/>
    <property type="match status" value="1"/>
</dbReference>
<dbReference type="PIRSF" id="PIRSF005586">
    <property type="entry name" value="RNApol_RpoM"/>
    <property type="match status" value="1"/>
</dbReference>
<dbReference type="SMART" id="SM00440">
    <property type="entry name" value="ZnF_C2C2"/>
    <property type="match status" value="1"/>
</dbReference>
<dbReference type="SUPFAM" id="SSF57783">
    <property type="entry name" value="Zinc beta-ribbon"/>
    <property type="match status" value="1"/>
</dbReference>
<dbReference type="PROSITE" id="PS01030">
    <property type="entry name" value="RNA_POL_M_15KD"/>
    <property type="match status" value="1"/>
</dbReference>
<dbReference type="PROSITE" id="PS00466">
    <property type="entry name" value="ZF_TFIIS_1"/>
    <property type="match status" value="1"/>
</dbReference>
<dbReference type="PROSITE" id="PS51133">
    <property type="entry name" value="ZF_TFIIS_2"/>
    <property type="match status" value="1"/>
</dbReference>